<reference key="1">
    <citation type="journal article" date="2005" name="Nature">
        <title>The genome of the social amoeba Dictyostelium discoideum.</title>
        <authorList>
            <person name="Eichinger L."/>
            <person name="Pachebat J.A."/>
            <person name="Gloeckner G."/>
            <person name="Rajandream M.A."/>
            <person name="Sucgang R."/>
            <person name="Berriman M."/>
            <person name="Song J."/>
            <person name="Olsen R."/>
            <person name="Szafranski K."/>
            <person name="Xu Q."/>
            <person name="Tunggal B."/>
            <person name="Kummerfeld S."/>
            <person name="Madera M."/>
            <person name="Konfortov B.A."/>
            <person name="Rivero F."/>
            <person name="Bankier A.T."/>
            <person name="Lehmann R."/>
            <person name="Hamlin N."/>
            <person name="Davies R."/>
            <person name="Gaudet P."/>
            <person name="Fey P."/>
            <person name="Pilcher K."/>
            <person name="Chen G."/>
            <person name="Saunders D."/>
            <person name="Sodergren E.J."/>
            <person name="Davis P."/>
            <person name="Kerhornou A."/>
            <person name="Nie X."/>
            <person name="Hall N."/>
            <person name="Anjard C."/>
            <person name="Hemphill L."/>
            <person name="Bason N."/>
            <person name="Farbrother P."/>
            <person name="Desany B."/>
            <person name="Just E."/>
            <person name="Morio T."/>
            <person name="Rost R."/>
            <person name="Churcher C.M."/>
            <person name="Cooper J."/>
            <person name="Haydock S."/>
            <person name="van Driessche N."/>
            <person name="Cronin A."/>
            <person name="Goodhead I."/>
            <person name="Muzny D.M."/>
            <person name="Mourier T."/>
            <person name="Pain A."/>
            <person name="Lu M."/>
            <person name="Harper D."/>
            <person name="Lindsay R."/>
            <person name="Hauser H."/>
            <person name="James K.D."/>
            <person name="Quiles M."/>
            <person name="Madan Babu M."/>
            <person name="Saito T."/>
            <person name="Buchrieser C."/>
            <person name="Wardroper A."/>
            <person name="Felder M."/>
            <person name="Thangavelu M."/>
            <person name="Johnson D."/>
            <person name="Knights A."/>
            <person name="Loulseged H."/>
            <person name="Mungall K.L."/>
            <person name="Oliver K."/>
            <person name="Price C."/>
            <person name="Quail M.A."/>
            <person name="Urushihara H."/>
            <person name="Hernandez J."/>
            <person name="Rabbinowitsch E."/>
            <person name="Steffen D."/>
            <person name="Sanders M."/>
            <person name="Ma J."/>
            <person name="Kohara Y."/>
            <person name="Sharp S."/>
            <person name="Simmonds M.N."/>
            <person name="Spiegler S."/>
            <person name="Tivey A."/>
            <person name="Sugano S."/>
            <person name="White B."/>
            <person name="Walker D."/>
            <person name="Woodward J.R."/>
            <person name="Winckler T."/>
            <person name="Tanaka Y."/>
            <person name="Shaulsky G."/>
            <person name="Schleicher M."/>
            <person name="Weinstock G.M."/>
            <person name="Rosenthal A."/>
            <person name="Cox E.C."/>
            <person name="Chisholm R.L."/>
            <person name="Gibbs R.A."/>
            <person name="Loomis W.F."/>
            <person name="Platzer M."/>
            <person name="Kay R.R."/>
            <person name="Williams J.G."/>
            <person name="Dear P.H."/>
            <person name="Noegel A.A."/>
            <person name="Barrell B.G."/>
            <person name="Kuspa A."/>
        </authorList>
    </citation>
    <scope>NUCLEOTIDE SEQUENCE [LARGE SCALE GENOMIC DNA]</scope>
    <source>
        <strain>AX4</strain>
    </source>
</reference>
<reference key="2">
    <citation type="journal article" date="2006" name="Mol. Cell. Proteomics">
        <title>Proteomics fingerprinting of phagosome maturation and evidence for the role of a Galpha during uptake.</title>
        <authorList>
            <person name="Gotthardt D."/>
            <person name="Blancheteau V."/>
            <person name="Bosserhoff A."/>
            <person name="Ruppert T."/>
            <person name="Delorenzi M."/>
            <person name="Soldati T."/>
        </authorList>
    </citation>
    <scope>IDENTIFICATION BY MASS SPECTROMETRY [LARGE SCALE ANALYSIS]</scope>
    <source>
        <strain>AX2</strain>
    </source>
</reference>
<comment type="function">
    <text evidence="1">Component of the anaphase promoting complex/cyclosome (APC/C), a cell cycle-regulated E3 ubiquitin-protein ligase complex that controls progression through mitosis and the G1 phase of the cell cycle.</text>
</comment>
<comment type="pathway">
    <text>Protein modification; protein ubiquitination.</text>
</comment>
<comment type="subunit">
    <text evidence="1">The APC/C is composed of at least 13 subunits that stay tightly associated throughout the cell cycle: anapc1, anapc2, anapc3, anapc4, anapc5, anapc6, anapc7, anapc8, anapc10, anapc11, cdc20, cdc26 and cdh1.</text>
</comment>
<comment type="subcellular location">
    <subcellularLocation>
        <location evidence="1">Nucleus</location>
    </subcellularLocation>
</comment>
<comment type="similarity">
    <text evidence="3">Belongs to the WD repeat CDC20/Fizzy family.</text>
</comment>
<sequence>MNSNYETAELEQLLSLNAPLENVEARWQRKARQNNSNTNNNNGNNGGDRFIPNKMNIDIGHFNLTKENSNPNPNAINNNSSTSTSTTATSSTTNNIESTLYKDTLANQLFESNSGDLESKILSFKSKAPVGNVSSSTNSLRVLYSQNQVGSTPTDQSLKKQFRQIPQQPERILDAPDIVDDYYLNLLDWSSQNVIAIPLGQTVYLWNATTSEIQRLFQVEQQDDYITSLQWTKDGNYLAVGTNSCTIQLWDVAHTKKVRELRGHAGRVGALAWNDYILSSGSSDTNIFNHDVRVQNHHVSTLSGHSQEVCGLKWSHDGGQLASGGNDNIINIWDINSENFETPAHTFEQHTAAVRALAWCPFQPNLLATGGGAADRTIRFWNTITGVCLNTVDTMSQVCSIQWSTTYRELVSSHGYSQNQLCVWKYPSMVKCAELTGHTSRALHTAISPDGETVVSASADETLRFWRVFEKENKLPTANRKSKEVSDGSMMRNINSLIR</sequence>
<gene>
    <name type="primary">cdc20</name>
    <name type="ORF">DDB_G0285601</name>
</gene>
<dbReference type="EMBL" id="AAFI02000079">
    <property type="protein sequence ID" value="EAL64638.1"/>
    <property type="molecule type" value="Genomic_DNA"/>
</dbReference>
<dbReference type="RefSeq" id="XP_638150.1">
    <property type="nucleotide sequence ID" value="XM_633058.1"/>
</dbReference>
<dbReference type="SMR" id="Q54MZ3"/>
<dbReference type="FunCoup" id="Q54MZ3">
    <property type="interactions" value="435"/>
</dbReference>
<dbReference type="STRING" id="44689.Q54MZ3"/>
<dbReference type="PaxDb" id="44689-DDB0237885"/>
<dbReference type="EnsemblProtists" id="EAL64638">
    <property type="protein sequence ID" value="EAL64638"/>
    <property type="gene ID" value="DDB_G0285601"/>
</dbReference>
<dbReference type="GeneID" id="8625198"/>
<dbReference type="KEGG" id="ddi:DDB_G0285601"/>
<dbReference type="dictyBase" id="DDB_G0285601">
    <property type="gene designation" value="cdc20"/>
</dbReference>
<dbReference type="VEuPathDB" id="AmoebaDB:DDB_G0285601"/>
<dbReference type="eggNOG" id="KOG0305">
    <property type="taxonomic scope" value="Eukaryota"/>
</dbReference>
<dbReference type="HOGENOM" id="CLU_014831_6_1_1"/>
<dbReference type="InParanoid" id="Q54MZ3"/>
<dbReference type="OMA" id="CSGACLN"/>
<dbReference type="PhylomeDB" id="Q54MZ3"/>
<dbReference type="Reactome" id="R-DDI-141405">
    <property type="pathway name" value="Inhibition of the proteolytic activity of APC/C required for the onset of anaphase by mitotic spindle checkpoint components"/>
</dbReference>
<dbReference type="Reactome" id="R-DDI-141430">
    <property type="pathway name" value="Inactivation of APC/C via direct inhibition of the APC/C complex"/>
</dbReference>
<dbReference type="Reactome" id="R-DDI-174048">
    <property type="pathway name" value="APC/C:Cdc20 mediated degradation of Cyclin B"/>
</dbReference>
<dbReference type="Reactome" id="R-DDI-174154">
    <property type="pathway name" value="APC/C:Cdc20 mediated degradation of Securin"/>
</dbReference>
<dbReference type="Reactome" id="R-DDI-174178">
    <property type="pathway name" value="APC/C:Cdh1 mediated degradation of Cdc20 and other APC/C:Cdh1 targeted proteins in late mitosis/early G1"/>
</dbReference>
<dbReference type="Reactome" id="R-DDI-174184">
    <property type="pathway name" value="Cdc20:Phospho-APC/C mediated degradation of Cyclin A"/>
</dbReference>
<dbReference type="Reactome" id="R-DDI-176407">
    <property type="pathway name" value="Conversion from APC/C:Cdc20 to APC/C:Cdh1 in late anaphase"/>
</dbReference>
<dbReference type="Reactome" id="R-DDI-176409">
    <property type="pathway name" value="APC/C:Cdc20 mediated degradation of mitotic proteins"/>
</dbReference>
<dbReference type="Reactome" id="R-DDI-179409">
    <property type="pathway name" value="APC-Cdc20 mediated degradation of Nek2A"/>
</dbReference>
<dbReference type="Reactome" id="R-DDI-2467813">
    <property type="pathway name" value="Separation of Sister Chromatids"/>
</dbReference>
<dbReference type="Reactome" id="R-DDI-5689880">
    <property type="pathway name" value="Ub-specific processing proteases"/>
</dbReference>
<dbReference type="Reactome" id="R-DDI-983168">
    <property type="pathway name" value="Antigen processing: Ubiquitination &amp; Proteasome degradation"/>
</dbReference>
<dbReference type="UniPathway" id="UPA00143"/>
<dbReference type="PRO" id="PR:Q54MZ3"/>
<dbReference type="Proteomes" id="UP000002195">
    <property type="component" value="Chromosome 4"/>
</dbReference>
<dbReference type="GO" id="GO:0005680">
    <property type="term" value="C:anaphase-promoting complex"/>
    <property type="evidence" value="ECO:0000318"/>
    <property type="project" value="GO_Central"/>
</dbReference>
<dbReference type="GO" id="GO:0045335">
    <property type="term" value="C:phagocytic vesicle"/>
    <property type="evidence" value="ECO:0007005"/>
    <property type="project" value="dictyBase"/>
</dbReference>
<dbReference type="GO" id="GO:0010997">
    <property type="term" value="F:anaphase-promoting complex binding"/>
    <property type="evidence" value="ECO:0000318"/>
    <property type="project" value="GO_Central"/>
</dbReference>
<dbReference type="GO" id="GO:1990757">
    <property type="term" value="F:ubiquitin ligase activator activity"/>
    <property type="evidence" value="ECO:0000318"/>
    <property type="project" value="GO_Central"/>
</dbReference>
<dbReference type="GO" id="GO:0031145">
    <property type="term" value="P:anaphase-promoting complex-dependent catabolic process"/>
    <property type="evidence" value="ECO:0000318"/>
    <property type="project" value="GO_Central"/>
</dbReference>
<dbReference type="GO" id="GO:0051301">
    <property type="term" value="P:cell division"/>
    <property type="evidence" value="ECO:0007669"/>
    <property type="project" value="UniProtKB-KW"/>
</dbReference>
<dbReference type="GO" id="GO:1905786">
    <property type="term" value="P:positive regulation of anaphase-promoting complex-dependent catabolic process"/>
    <property type="evidence" value="ECO:0000318"/>
    <property type="project" value="GO_Central"/>
</dbReference>
<dbReference type="GO" id="GO:0016567">
    <property type="term" value="P:protein ubiquitination"/>
    <property type="evidence" value="ECO:0007669"/>
    <property type="project" value="UniProtKB-UniPathway"/>
</dbReference>
<dbReference type="CDD" id="cd00200">
    <property type="entry name" value="WD40"/>
    <property type="match status" value="1"/>
</dbReference>
<dbReference type="FunFam" id="2.130.10.10:FF:000224">
    <property type="entry name" value="cell division cycle protein 20 homolog"/>
    <property type="match status" value="1"/>
</dbReference>
<dbReference type="Gene3D" id="2.130.10.10">
    <property type="entry name" value="YVTN repeat-like/Quinoprotein amine dehydrogenase"/>
    <property type="match status" value="1"/>
</dbReference>
<dbReference type="InterPro" id="IPR033010">
    <property type="entry name" value="Cdc20/Fizzy"/>
</dbReference>
<dbReference type="InterPro" id="IPR015943">
    <property type="entry name" value="WD40/YVTN_repeat-like_dom_sf"/>
</dbReference>
<dbReference type="InterPro" id="IPR056150">
    <property type="entry name" value="WD40_CDC20-Fz"/>
</dbReference>
<dbReference type="InterPro" id="IPR019775">
    <property type="entry name" value="WD40_repeat_CS"/>
</dbReference>
<dbReference type="InterPro" id="IPR036322">
    <property type="entry name" value="WD40_repeat_dom_sf"/>
</dbReference>
<dbReference type="InterPro" id="IPR001680">
    <property type="entry name" value="WD40_rpt"/>
</dbReference>
<dbReference type="PANTHER" id="PTHR19918">
    <property type="entry name" value="CELL DIVISION CYCLE 20 CDC20 FIZZY -RELATED"/>
    <property type="match status" value="1"/>
</dbReference>
<dbReference type="PANTHER" id="PTHR19918:SF8">
    <property type="entry name" value="FI02843P"/>
    <property type="match status" value="1"/>
</dbReference>
<dbReference type="Pfam" id="PF24807">
    <property type="entry name" value="WD40_CDC20-Fz"/>
    <property type="match status" value="1"/>
</dbReference>
<dbReference type="SMART" id="SM00320">
    <property type="entry name" value="WD40"/>
    <property type="match status" value="6"/>
</dbReference>
<dbReference type="SUPFAM" id="SSF50978">
    <property type="entry name" value="WD40 repeat-like"/>
    <property type="match status" value="1"/>
</dbReference>
<dbReference type="PROSITE" id="PS00678">
    <property type="entry name" value="WD_REPEATS_1"/>
    <property type="match status" value="2"/>
</dbReference>
<dbReference type="PROSITE" id="PS50082">
    <property type="entry name" value="WD_REPEATS_2"/>
    <property type="match status" value="3"/>
</dbReference>
<dbReference type="PROSITE" id="PS50294">
    <property type="entry name" value="WD_REPEATS_REGION"/>
    <property type="match status" value="1"/>
</dbReference>
<keyword id="KW-0131">Cell cycle</keyword>
<keyword id="KW-0132">Cell division</keyword>
<keyword id="KW-0498">Mitosis</keyword>
<keyword id="KW-0539">Nucleus</keyword>
<keyword id="KW-1185">Reference proteome</keyword>
<keyword id="KW-0677">Repeat</keyword>
<keyword id="KW-0833">Ubl conjugation pathway</keyword>
<keyword id="KW-0853">WD repeat</keyword>
<proteinExistence type="evidence at protein level"/>
<organism>
    <name type="scientific">Dictyostelium discoideum</name>
    <name type="common">Social amoeba</name>
    <dbReference type="NCBI Taxonomy" id="44689"/>
    <lineage>
        <taxon>Eukaryota</taxon>
        <taxon>Amoebozoa</taxon>
        <taxon>Evosea</taxon>
        <taxon>Eumycetozoa</taxon>
        <taxon>Dictyostelia</taxon>
        <taxon>Dictyosteliales</taxon>
        <taxon>Dictyosteliaceae</taxon>
        <taxon>Dictyostelium</taxon>
    </lineage>
</organism>
<name>CDC20_DICDI</name>
<evidence type="ECO:0000250" key="1"/>
<evidence type="ECO:0000256" key="2">
    <source>
        <dbReference type="SAM" id="MobiDB-lite"/>
    </source>
</evidence>
<evidence type="ECO:0000305" key="3"/>
<feature type="chain" id="PRO_0000328534" description="Anaphase-promoting complex subunit cdc20">
    <location>
        <begin position="1"/>
        <end position="499"/>
    </location>
</feature>
<feature type="repeat" description="WD 1">
    <location>
        <begin position="179"/>
        <end position="216"/>
    </location>
</feature>
<feature type="repeat" description="WD 2">
    <location>
        <begin position="221"/>
        <end position="260"/>
    </location>
</feature>
<feature type="repeat" description="WD 3">
    <location>
        <begin position="263"/>
        <end position="300"/>
    </location>
</feature>
<feature type="repeat" description="WD 4">
    <location>
        <begin position="304"/>
        <end position="343"/>
    </location>
</feature>
<feature type="repeat" description="WD 5">
    <location>
        <begin position="349"/>
        <end position="391"/>
    </location>
</feature>
<feature type="repeat" description="WD 6">
    <location>
        <begin position="393"/>
        <end position="434"/>
    </location>
</feature>
<feature type="repeat" description="WD 7">
    <location>
        <begin position="437"/>
        <end position="476"/>
    </location>
</feature>
<feature type="region of interest" description="Disordered" evidence="2">
    <location>
        <begin position="28"/>
        <end position="92"/>
    </location>
</feature>
<feature type="compositionally biased region" description="Low complexity" evidence="2">
    <location>
        <begin position="34"/>
        <end position="43"/>
    </location>
</feature>
<feature type="compositionally biased region" description="Low complexity" evidence="2">
    <location>
        <begin position="67"/>
        <end position="92"/>
    </location>
</feature>
<accession>Q54MZ3</accession>
<protein>
    <recommendedName>
        <fullName>Anaphase-promoting complex subunit cdc20</fullName>
    </recommendedName>
</protein>